<evidence type="ECO:0000250" key="1"/>
<evidence type="ECO:0000255" key="2"/>
<evidence type="ECO:0000255" key="3">
    <source>
        <dbReference type="PROSITE-ProRule" id="PRU00274"/>
    </source>
</evidence>
<evidence type="ECO:0000269" key="4">
    <source>
    </source>
</evidence>
<evidence type="ECO:0000305" key="5">
    <source>
    </source>
</evidence>
<name>VSPL_BOTLC</name>
<dbReference type="EC" id="3.4.21.74"/>
<dbReference type="GO" id="GO:0005576">
    <property type="term" value="C:extracellular region"/>
    <property type="evidence" value="ECO:0007669"/>
    <property type="project" value="UniProtKB-SubCell"/>
</dbReference>
<dbReference type="GO" id="GO:0030141">
    <property type="term" value="C:secretory granule"/>
    <property type="evidence" value="ECO:0007669"/>
    <property type="project" value="TreeGrafter"/>
</dbReference>
<dbReference type="GO" id="GO:0004252">
    <property type="term" value="F:serine-type endopeptidase activity"/>
    <property type="evidence" value="ECO:0007669"/>
    <property type="project" value="InterPro"/>
</dbReference>
<dbReference type="GO" id="GO:0090729">
    <property type="term" value="F:toxin activity"/>
    <property type="evidence" value="ECO:0007669"/>
    <property type="project" value="UniProtKB-KW"/>
</dbReference>
<dbReference type="GO" id="GO:0006508">
    <property type="term" value="P:proteolysis"/>
    <property type="evidence" value="ECO:0007669"/>
    <property type="project" value="UniProtKB-KW"/>
</dbReference>
<dbReference type="CDD" id="cd00190">
    <property type="entry name" value="Tryp_SPc"/>
    <property type="match status" value="1"/>
</dbReference>
<dbReference type="FunFam" id="2.40.10.10:FF:000158">
    <property type="entry name" value="Thrombin-like enzyme saxthrombin"/>
    <property type="match status" value="1"/>
</dbReference>
<dbReference type="Gene3D" id="2.40.10.10">
    <property type="entry name" value="Trypsin-like serine proteases"/>
    <property type="match status" value="2"/>
</dbReference>
<dbReference type="InterPro" id="IPR009003">
    <property type="entry name" value="Peptidase_S1_PA"/>
</dbReference>
<dbReference type="InterPro" id="IPR043504">
    <property type="entry name" value="Peptidase_S1_PA_chymotrypsin"/>
</dbReference>
<dbReference type="InterPro" id="IPR001314">
    <property type="entry name" value="Peptidase_S1A"/>
</dbReference>
<dbReference type="InterPro" id="IPR001254">
    <property type="entry name" value="Trypsin_dom"/>
</dbReference>
<dbReference type="InterPro" id="IPR018114">
    <property type="entry name" value="TRYPSIN_HIS"/>
</dbReference>
<dbReference type="InterPro" id="IPR033116">
    <property type="entry name" value="TRYPSIN_SER"/>
</dbReference>
<dbReference type="PANTHER" id="PTHR24271:SF47">
    <property type="entry name" value="KALLIKREIN-1"/>
    <property type="match status" value="1"/>
</dbReference>
<dbReference type="PANTHER" id="PTHR24271">
    <property type="entry name" value="KALLIKREIN-RELATED"/>
    <property type="match status" value="1"/>
</dbReference>
<dbReference type="Pfam" id="PF00089">
    <property type="entry name" value="Trypsin"/>
    <property type="match status" value="1"/>
</dbReference>
<dbReference type="PRINTS" id="PR00722">
    <property type="entry name" value="CHYMOTRYPSIN"/>
</dbReference>
<dbReference type="SMART" id="SM00020">
    <property type="entry name" value="Tryp_SPc"/>
    <property type="match status" value="1"/>
</dbReference>
<dbReference type="SUPFAM" id="SSF50494">
    <property type="entry name" value="Trypsin-like serine proteases"/>
    <property type="match status" value="1"/>
</dbReference>
<dbReference type="PROSITE" id="PS50240">
    <property type="entry name" value="TRYPSIN_DOM"/>
    <property type="match status" value="1"/>
</dbReference>
<dbReference type="PROSITE" id="PS00134">
    <property type="entry name" value="TRYPSIN_HIS"/>
    <property type="match status" value="1"/>
</dbReference>
<dbReference type="PROSITE" id="PS00135">
    <property type="entry name" value="TRYPSIN_SER"/>
    <property type="match status" value="1"/>
</dbReference>
<feature type="chain" id="PRO_0000413952" description="Thrombin-like enzyme leucurobin">
    <location>
        <begin position="1"/>
        <end position="231"/>
    </location>
</feature>
<feature type="domain" description="Peptidase S1" evidence="3">
    <location>
        <begin position="1"/>
        <end position="223"/>
    </location>
</feature>
<feature type="active site" description="Charge relay system" evidence="1">
    <location>
        <position position="41"/>
    </location>
</feature>
<feature type="active site" description="Charge relay system" evidence="1">
    <location>
        <position position="86"/>
    </location>
</feature>
<feature type="active site" description="Charge relay system" evidence="1">
    <location>
        <position position="178"/>
    </location>
</feature>
<feature type="site" description="Required for specificity" evidence="1">
    <location>
        <position position="172"/>
    </location>
</feature>
<feature type="glycosylation site" description="N-linked (GlcNAc...) asparagine" evidence="2">
    <location>
        <position position="146"/>
    </location>
</feature>
<feature type="glycosylation site" description="N-linked (GlcNAc...) asparagine" evidence="2">
    <location>
        <position position="225"/>
    </location>
</feature>
<feature type="disulfide bond" evidence="3">
    <location>
        <begin position="7"/>
        <end position="139"/>
    </location>
</feature>
<feature type="disulfide bond" evidence="3">
    <location>
        <begin position="26"/>
        <end position="42"/>
    </location>
</feature>
<feature type="disulfide bond" evidence="3">
    <location>
        <begin position="74"/>
        <end position="230"/>
    </location>
</feature>
<feature type="disulfide bond" evidence="3">
    <location>
        <begin position="118"/>
        <end position="184"/>
    </location>
</feature>
<feature type="disulfide bond" evidence="3">
    <location>
        <begin position="150"/>
        <end position="163"/>
    </location>
</feature>
<feature type="disulfide bond" evidence="3">
    <location>
        <begin position="174"/>
        <end position="199"/>
    </location>
</feature>
<proteinExistence type="evidence at protein level"/>
<accession>P0DJ86</accession>
<reference key="1">
    <citation type="journal article" date="2007" name="Comp. Biochem. Physiol.">
        <title>Purification and properties of a coagulant thrombin-like enzyme from the venom of Bothrops leucurus.</title>
        <authorList>
            <person name="Magalhaes A."/>
            <person name="Magalhaes H.P.B."/>
            <person name="Richardson M."/>
            <person name="Gontijo S."/>
            <person name="Ferreira R.N."/>
            <person name="Almeida A.P."/>
            <person name="Sanchez E.F."/>
        </authorList>
    </citation>
    <scope>PROTEIN SEQUENCE</scope>
    <scope>FUNCTION</scope>
    <scope>CATALYTIC ACTIVITY</scope>
    <scope>ACTIVITY REGULATION</scope>
    <scope>BIOPHYSICOCHEMICAL PROPERTIES</scope>
    <scope>SUBUNIT</scope>
    <scope>SUBCELLULAR LOCATION</scope>
    <scope>MASS SPECTROMETRY</scope>
    <source>
        <tissue>Venom</tissue>
    </source>
</reference>
<organism>
    <name type="scientific">Bothrops leucurus</name>
    <name type="common">Whitetail lancehead</name>
    <dbReference type="NCBI Taxonomy" id="157295"/>
    <lineage>
        <taxon>Eukaryota</taxon>
        <taxon>Metazoa</taxon>
        <taxon>Chordata</taxon>
        <taxon>Craniata</taxon>
        <taxon>Vertebrata</taxon>
        <taxon>Euteleostomi</taxon>
        <taxon>Lepidosauria</taxon>
        <taxon>Squamata</taxon>
        <taxon>Bifurcata</taxon>
        <taxon>Unidentata</taxon>
        <taxon>Episquamata</taxon>
        <taxon>Toxicofera</taxon>
        <taxon>Serpentes</taxon>
        <taxon>Colubroidea</taxon>
        <taxon>Viperidae</taxon>
        <taxon>Crotalinae</taxon>
        <taxon>Bothrops</taxon>
    </lineage>
</organism>
<comment type="function">
    <text evidence="4">Thrombin-like snake venom serine protease that cleaves Arg-Gly bonds in alpha-chain of fibrinogen (FGA). Induces temporary episodes of opisthotonos and rapid rolling around the long axis of the animal (gyroxin-like effect), when injected into the tail veins of mice (0.143 ug/g mouse).</text>
</comment>
<comment type="catalytic activity">
    <reaction evidence="4">
        <text>Selective cleavage of Arg-|-Xaa bond in fibrinogen, to form fibrin, and release fibrinopeptide A. The specificity of further degradation of fibrinogen varies with species origin of the enzyme.</text>
        <dbReference type="EC" id="3.4.21.74"/>
    </reaction>
</comment>
<comment type="activity regulation">
    <text evidence="4">Inhibited by PMSF and benzamidine. Its clotting effect is strongly inhibited by antibothropic serum. Is not inhibited by heparin.</text>
</comment>
<comment type="biophysicochemical properties">
    <kinetics>
        <KM evidence="4">9.9 uM for H-D-Val-Leu-Arg-pNA (S-2266)</KM>
        <KM evidence="4">7.9 uM for H-D-Pro-Phe-Arg-pNA (S-2302)</KM>
        <KM evidence="4">2.7 uM for Bz-Phe-Val-Arg-pNA (S-2160)</KM>
        <KM evidence="4">5.7 uM for H-D-Val-Leu-Lys-pNA (S-2251)</KM>
    </kinetics>
    <phDependence>
        <text evidence="4">Optimum pH is 7.0-8.5.</text>
    </phDependence>
</comment>
<comment type="subunit">
    <text evidence="4">Monomer.</text>
</comment>
<comment type="subcellular location">
    <subcellularLocation>
        <location evidence="4">Secreted</location>
    </subcellularLocation>
</comment>
<comment type="tissue specificity">
    <text>Expressed by the venom gland.</text>
</comment>
<comment type="PTM">
    <text>Glycosylated.</text>
</comment>
<comment type="mass spectrometry"/>
<comment type="miscellaneous">
    <text evidence="5">Negative results: does not activate factor XIII (F13A) and is unable to release kinins from heat-treated bovine plasma. Does not cleave beta-chain of fibrinogen (FGB) (PubMed:16481207).</text>
</comment>
<comment type="similarity">
    <text evidence="3">Belongs to the peptidase S1 family. Snake venom subfamily.</text>
</comment>
<keyword id="KW-1204">Blood coagulation cascade activating toxin</keyword>
<keyword id="KW-0903">Direct protein sequencing</keyword>
<keyword id="KW-1015">Disulfide bond</keyword>
<keyword id="KW-0325">Glycoprotein</keyword>
<keyword id="KW-1199">Hemostasis impairing toxin</keyword>
<keyword id="KW-0378">Hydrolase</keyword>
<keyword id="KW-0645">Protease</keyword>
<keyword id="KW-0964">Secreted</keyword>
<keyword id="KW-0720">Serine protease</keyword>
<keyword id="KW-0800">Toxin</keyword>
<sequence>VIGGDECDINEHPFLAFMYYSPRYFCGMTLINQEWVLTAAHCNRRFMRIXXXXHAGSVANYDEVVRXXXXXFICPNKKKNVITDKDIMLIRLDRPVKNSEHIAPLSLPSNPPSVGSVCRIMGWGAITTSEDTYPDVPHCANINLFNNTVCREAYNGLPAKTLCAGVLQGGIDTCGGDSGGPLICNGQFQGILSWGSDPCAEPRKPAFYTKVFDYLPWIQSIIAGNKTATCP</sequence>
<protein>
    <recommendedName>
        <fullName>Thrombin-like enzyme leucurobin</fullName>
        <shortName>Leuc</shortName>
        <shortName>SVTLE</shortName>
        <ecNumber>3.4.21.74</ecNumber>
    </recommendedName>
    <alternativeName>
        <fullName>Fibrinogen-clotting enzyme</fullName>
    </alternativeName>
    <alternativeName>
        <fullName>Snake venom serine protease</fullName>
        <shortName>SVSP</shortName>
    </alternativeName>
</protein>